<protein>
    <recommendedName>
        <fullName evidence="1">Glutamine--tRNA ligase</fullName>
        <ecNumber evidence="1">6.1.1.18</ecNumber>
    </recommendedName>
    <alternativeName>
        <fullName evidence="1">Glutaminyl-tRNA synthetase</fullName>
        <shortName evidence="1">GlnRS</shortName>
    </alternativeName>
</protein>
<comment type="catalytic activity">
    <reaction evidence="1">
        <text>tRNA(Gln) + L-glutamine + ATP = L-glutaminyl-tRNA(Gln) + AMP + diphosphate</text>
        <dbReference type="Rhea" id="RHEA:20121"/>
        <dbReference type="Rhea" id="RHEA-COMP:9662"/>
        <dbReference type="Rhea" id="RHEA-COMP:9681"/>
        <dbReference type="ChEBI" id="CHEBI:30616"/>
        <dbReference type="ChEBI" id="CHEBI:33019"/>
        <dbReference type="ChEBI" id="CHEBI:58359"/>
        <dbReference type="ChEBI" id="CHEBI:78442"/>
        <dbReference type="ChEBI" id="CHEBI:78521"/>
        <dbReference type="ChEBI" id="CHEBI:456215"/>
        <dbReference type="EC" id="6.1.1.18"/>
    </reaction>
</comment>
<comment type="subunit">
    <text evidence="1">Monomer.</text>
</comment>
<comment type="subcellular location">
    <subcellularLocation>
        <location evidence="1">Cytoplasm</location>
    </subcellularLocation>
</comment>
<comment type="similarity">
    <text evidence="1">Belongs to the class-I aminoacyl-tRNA synthetase family.</text>
</comment>
<keyword id="KW-0030">Aminoacyl-tRNA synthetase</keyword>
<keyword id="KW-0067">ATP-binding</keyword>
<keyword id="KW-0963">Cytoplasm</keyword>
<keyword id="KW-0436">Ligase</keyword>
<keyword id="KW-0547">Nucleotide-binding</keyword>
<keyword id="KW-0648">Protein biosynthesis</keyword>
<accession>A5F2T1</accession>
<accession>C3LZ08</accession>
<organism>
    <name type="scientific">Vibrio cholerae serotype O1 (strain ATCC 39541 / Classical Ogawa 395 / O395)</name>
    <dbReference type="NCBI Taxonomy" id="345073"/>
    <lineage>
        <taxon>Bacteria</taxon>
        <taxon>Pseudomonadati</taxon>
        <taxon>Pseudomonadota</taxon>
        <taxon>Gammaproteobacteria</taxon>
        <taxon>Vibrionales</taxon>
        <taxon>Vibrionaceae</taxon>
        <taxon>Vibrio</taxon>
    </lineage>
</organism>
<name>SYQ_VIBC3</name>
<dbReference type="EC" id="6.1.1.18" evidence="1"/>
<dbReference type="EMBL" id="CP000627">
    <property type="protein sequence ID" value="ABQ21385.1"/>
    <property type="molecule type" value="Genomic_DNA"/>
</dbReference>
<dbReference type="EMBL" id="CP001235">
    <property type="protein sequence ID" value="ACP09024.1"/>
    <property type="molecule type" value="Genomic_DNA"/>
</dbReference>
<dbReference type="RefSeq" id="WP_001287116.1">
    <property type="nucleotide sequence ID" value="NZ_JAACZH010000005.1"/>
</dbReference>
<dbReference type="SMR" id="A5F2T1"/>
<dbReference type="KEGG" id="vco:VC0395_A0517"/>
<dbReference type="KEGG" id="vcr:VC395_1012"/>
<dbReference type="PATRIC" id="fig|345073.21.peg.981"/>
<dbReference type="eggNOG" id="COG0008">
    <property type="taxonomic scope" value="Bacteria"/>
</dbReference>
<dbReference type="HOGENOM" id="CLU_001882_2_3_6"/>
<dbReference type="OrthoDB" id="9801560at2"/>
<dbReference type="Proteomes" id="UP000000249">
    <property type="component" value="Chromosome 2"/>
</dbReference>
<dbReference type="GO" id="GO:0005829">
    <property type="term" value="C:cytosol"/>
    <property type="evidence" value="ECO:0007669"/>
    <property type="project" value="TreeGrafter"/>
</dbReference>
<dbReference type="GO" id="GO:0005524">
    <property type="term" value="F:ATP binding"/>
    <property type="evidence" value="ECO:0007669"/>
    <property type="project" value="UniProtKB-UniRule"/>
</dbReference>
<dbReference type="GO" id="GO:0004819">
    <property type="term" value="F:glutamine-tRNA ligase activity"/>
    <property type="evidence" value="ECO:0007669"/>
    <property type="project" value="UniProtKB-UniRule"/>
</dbReference>
<dbReference type="GO" id="GO:0006425">
    <property type="term" value="P:glutaminyl-tRNA aminoacylation"/>
    <property type="evidence" value="ECO:0007669"/>
    <property type="project" value="InterPro"/>
</dbReference>
<dbReference type="GO" id="GO:0006424">
    <property type="term" value="P:glutamyl-tRNA aminoacylation"/>
    <property type="evidence" value="ECO:0007669"/>
    <property type="project" value="UniProtKB-UniRule"/>
</dbReference>
<dbReference type="CDD" id="cd00807">
    <property type="entry name" value="GlnRS_core"/>
    <property type="match status" value="1"/>
</dbReference>
<dbReference type="FunFam" id="1.10.1160.10:FF:000001">
    <property type="entry name" value="Glutamine--tRNA ligase"/>
    <property type="match status" value="1"/>
</dbReference>
<dbReference type="FunFam" id="2.40.240.10:FF:000001">
    <property type="entry name" value="Glutamine--tRNA ligase"/>
    <property type="match status" value="1"/>
</dbReference>
<dbReference type="FunFam" id="2.40.240.10:FF:000003">
    <property type="entry name" value="Glutamine--tRNA ligase"/>
    <property type="match status" value="1"/>
</dbReference>
<dbReference type="FunFam" id="3.90.800.10:FF:000001">
    <property type="entry name" value="Glutamine--tRNA ligase"/>
    <property type="match status" value="1"/>
</dbReference>
<dbReference type="FunFam" id="3.40.50.620:FF:000037">
    <property type="entry name" value="Glutamine--tRNA ligase cytoplasmic"/>
    <property type="match status" value="1"/>
</dbReference>
<dbReference type="Gene3D" id="1.10.1160.10">
    <property type="entry name" value="Glutamyl-trna Synthetase, Domain 2"/>
    <property type="match status" value="1"/>
</dbReference>
<dbReference type="Gene3D" id="3.90.800.10">
    <property type="entry name" value="Glutamyl-tRNA Synthetase, Domain 3"/>
    <property type="match status" value="1"/>
</dbReference>
<dbReference type="Gene3D" id="3.40.50.620">
    <property type="entry name" value="HUPs"/>
    <property type="match status" value="1"/>
</dbReference>
<dbReference type="Gene3D" id="2.40.240.10">
    <property type="entry name" value="Ribosomal Protein L25, Chain P"/>
    <property type="match status" value="2"/>
</dbReference>
<dbReference type="HAMAP" id="MF_00126">
    <property type="entry name" value="Gln_tRNA_synth"/>
    <property type="match status" value="1"/>
</dbReference>
<dbReference type="InterPro" id="IPR001412">
    <property type="entry name" value="aa-tRNA-synth_I_CS"/>
</dbReference>
<dbReference type="InterPro" id="IPR004514">
    <property type="entry name" value="Gln-tRNA-synth"/>
</dbReference>
<dbReference type="InterPro" id="IPR050132">
    <property type="entry name" value="Gln/Glu-tRNA_Ligase"/>
</dbReference>
<dbReference type="InterPro" id="IPR022861">
    <property type="entry name" value="Gln_tRNA_ligase_bac"/>
</dbReference>
<dbReference type="InterPro" id="IPR000924">
    <property type="entry name" value="Glu/Gln-tRNA-synth"/>
</dbReference>
<dbReference type="InterPro" id="IPR020058">
    <property type="entry name" value="Glu/Gln-tRNA-synth_Ib_cat-dom"/>
</dbReference>
<dbReference type="InterPro" id="IPR020059">
    <property type="entry name" value="Glu/Gln-tRNA-synth_Ib_codon-bd"/>
</dbReference>
<dbReference type="InterPro" id="IPR020061">
    <property type="entry name" value="Glu_tRNA_lig_a-bdl"/>
</dbReference>
<dbReference type="InterPro" id="IPR020056">
    <property type="entry name" value="Rbsml_bL25/Gln-tRNA_synth_N"/>
</dbReference>
<dbReference type="InterPro" id="IPR011035">
    <property type="entry name" value="Ribosomal_bL25/Gln-tRNA_synth"/>
</dbReference>
<dbReference type="InterPro" id="IPR014729">
    <property type="entry name" value="Rossmann-like_a/b/a_fold"/>
</dbReference>
<dbReference type="InterPro" id="IPR049437">
    <property type="entry name" value="tRNA-synt_1c_C2"/>
</dbReference>
<dbReference type="NCBIfam" id="TIGR00440">
    <property type="entry name" value="glnS"/>
    <property type="match status" value="1"/>
</dbReference>
<dbReference type="NCBIfam" id="NF011291">
    <property type="entry name" value="PRK14703.1"/>
    <property type="match status" value="1"/>
</dbReference>
<dbReference type="PANTHER" id="PTHR43097:SF5">
    <property type="entry name" value="GLUTAMATE--TRNA LIGASE"/>
    <property type="match status" value="1"/>
</dbReference>
<dbReference type="PANTHER" id="PTHR43097">
    <property type="entry name" value="GLUTAMINE-TRNA LIGASE"/>
    <property type="match status" value="1"/>
</dbReference>
<dbReference type="Pfam" id="PF00749">
    <property type="entry name" value="tRNA-synt_1c"/>
    <property type="match status" value="1"/>
</dbReference>
<dbReference type="Pfam" id="PF03950">
    <property type="entry name" value="tRNA-synt_1c_C"/>
    <property type="match status" value="1"/>
</dbReference>
<dbReference type="Pfam" id="PF20974">
    <property type="entry name" value="tRNA-synt_1c_C2"/>
    <property type="match status" value="1"/>
</dbReference>
<dbReference type="PRINTS" id="PR00987">
    <property type="entry name" value="TRNASYNTHGLU"/>
</dbReference>
<dbReference type="SUPFAM" id="SSF52374">
    <property type="entry name" value="Nucleotidylyl transferase"/>
    <property type="match status" value="1"/>
</dbReference>
<dbReference type="SUPFAM" id="SSF50715">
    <property type="entry name" value="Ribosomal protein L25-like"/>
    <property type="match status" value="1"/>
</dbReference>
<dbReference type="PROSITE" id="PS00178">
    <property type="entry name" value="AA_TRNA_LIGASE_I"/>
    <property type="match status" value="1"/>
</dbReference>
<evidence type="ECO:0000255" key="1">
    <source>
        <dbReference type="HAMAP-Rule" id="MF_00126"/>
    </source>
</evidence>
<reference key="1">
    <citation type="submission" date="2007-03" db="EMBL/GenBank/DDBJ databases">
        <authorList>
            <person name="Heidelberg J."/>
        </authorList>
    </citation>
    <scope>NUCLEOTIDE SEQUENCE [LARGE SCALE GENOMIC DNA]</scope>
    <source>
        <strain>ATCC 39541 / Classical Ogawa 395 / O395</strain>
    </source>
</reference>
<reference key="2">
    <citation type="journal article" date="2008" name="PLoS ONE">
        <title>A recalibrated molecular clock and independent origins for the cholera pandemic clones.</title>
        <authorList>
            <person name="Feng L."/>
            <person name="Reeves P.R."/>
            <person name="Lan R."/>
            <person name="Ren Y."/>
            <person name="Gao C."/>
            <person name="Zhou Z."/>
            <person name="Ren Y."/>
            <person name="Cheng J."/>
            <person name="Wang W."/>
            <person name="Wang J."/>
            <person name="Qian W."/>
            <person name="Li D."/>
            <person name="Wang L."/>
        </authorList>
    </citation>
    <scope>NUCLEOTIDE SEQUENCE [LARGE SCALE GENOMIC DNA]</scope>
    <source>
        <strain>ATCC 39541 / Classical Ogawa 395 / O395</strain>
    </source>
</reference>
<proteinExistence type="inferred from homology"/>
<feature type="chain" id="PRO_1000071399" description="Glutamine--tRNA ligase">
    <location>
        <begin position="1"/>
        <end position="556"/>
    </location>
</feature>
<feature type="short sequence motif" description="'HIGH' region" evidence="1">
    <location>
        <begin position="34"/>
        <end position="44"/>
    </location>
</feature>
<feature type="short sequence motif" description="'KMSKS' region" evidence="1">
    <location>
        <begin position="268"/>
        <end position="272"/>
    </location>
</feature>
<feature type="binding site" evidence="1">
    <location>
        <begin position="35"/>
        <end position="37"/>
    </location>
    <ligand>
        <name>ATP</name>
        <dbReference type="ChEBI" id="CHEBI:30616"/>
    </ligand>
</feature>
<feature type="binding site" evidence="1">
    <location>
        <begin position="41"/>
        <end position="47"/>
    </location>
    <ligand>
        <name>ATP</name>
        <dbReference type="ChEBI" id="CHEBI:30616"/>
    </ligand>
</feature>
<feature type="binding site" evidence="1">
    <location>
        <position position="67"/>
    </location>
    <ligand>
        <name>L-glutamine</name>
        <dbReference type="ChEBI" id="CHEBI:58359"/>
    </ligand>
</feature>
<feature type="binding site" evidence="1">
    <location>
        <position position="212"/>
    </location>
    <ligand>
        <name>L-glutamine</name>
        <dbReference type="ChEBI" id="CHEBI:58359"/>
    </ligand>
</feature>
<feature type="binding site" evidence="1">
    <location>
        <position position="231"/>
    </location>
    <ligand>
        <name>ATP</name>
        <dbReference type="ChEBI" id="CHEBI:30616"/>
    </ligand>
</feature>
<feature type="binding site" evidence="1">
    <location>
        <begin position="261"/>
        <end position="262"/>
    </location>
    <ligand>
        <name>ATP</name>
        <dbReference type="ChEBI" id="CHEBI:30616"/>
    </ligand>
</feature>
<feature type="binding site" evidence="1">
    <location>
        <begin position="269"/>
        <end position="271"/>
    </location>
    <ligand>
        <name>ATP</name>
        <dbReference type="ChEBI" id="CHEBI:30616"/>
    </ligand>
</feature>
<sequence length="556" mass="64118">MSEAEARPSNFIRQIIDKDLADGKHTTVHTRFPPEPNGYLHIGHAKSICLNFGIAQDYQGQCNLRFDDTNPEKENLEYVESIKKDVTWLGFDWSGEVCYSSDYFDKLYEYAIELIQKGLAYVDELTPEQIREYRGTLTEPGKHSPYRDRSVEENLALFEKMRAGEFAEGQACLRAKIDMASSFIVMRDPVLYRVRFAEHHQTGDKWCIYPMYDFTHCISDALEGITHSICTLEFQDNRRLYDWVLDNITIPCHPRQYEFSRLNLEYTVMSKRKLNQLVTEKLVTGWDDPRMPTISGLRRRGFTPSAIREFCKRIGVTKQENMIEYSALESCIRDDLNENAPRAMAVLDPVKLVIENFAAGTVETLTLANHPNKPEMGDREVPFTRELWIEREDFREEANKKYKRLVLGKEVRLRGAYVIKAERIEKDEQGNITTIFCSYDPETLGKNPADGRKVKGVIHWVSAEKGVPAEFRLYERLFTVPNPGAADNFAETINPESLVKVQGYVEPSLVEAKPEFGYQFERMGYFCADNKDSSPQALVFNRTVGLRDSFVKIDEE</sequence>
<gene>
    <name evidence="1" type="primary">glnS</name>
    <name type="ordered locus">VC0395_A0517</name>
    <name type="ordered locus">VC395_1012</name>
</gene>